<feature type="chain" id="PRO_0000091427" description="Elongation factor Tu">
    <location>
        <begin position="1"/>
        <end position="396"/>
    </location>
</feature>
<feature type="domain" description="tr-type G">
    <location>
        <begin position="10"/>
        <end position="206"/>
    </location>
</feature>
<feature type="region of interest" description="G1" evidence="1">
    <location>
        <begin position="19"/>
        <end position="26"/>
    </location>
</feature>
<feature type="region of interest" description="G2" evidence="1">
    <location>
        <begin position="60"/>
        <end position="64"/>
    </location>
</feature>
<feature type="region of interest" description="G3" evidence="1">
    <location>
        <begin position="81"/>
        <end position="84"/>
    </location>
</feature>
<feature type="region of interest" description="G4" evidence="1">
    <location>
        <begin position="136"/>
        <end position="139"/>
    </location>
</feature>
<feature type="region of interest" description="G5" evidence="1">
    <location>
        <begin position="174"/>
        <end position="176"/>
    </location>
</feature>
<feature type="binding site" evidence="2">
    <location>
        <begin position="19"/>
        <end position="26"/>
    </location>
    <ligand>
        <name>GTP</name>
        <dbReference type="ChEBI" id="CHEBI:37565"/>
    </ligand>
</feature>
<feature type="binding site" evidence="2">
    <location>
        <position position="26"/>
    </location>
    <ligand>
        <name>Mg(2+)</name>
        <dbReference type="ChEBI" id="CHEBI:18420"/>
    </ligand>
</feature>
<feature type="binding site" evidence="2">
    <location>
        <begin position="81"/>
        <end position="85"/>
    </location>
    <ligand>
        <name>GTP</name>
        <dbReference type="ChEBI" id="CHEBI:37565"/>
    </ligand>
</feature>
<feature type="binding site" evidence="2">
    <location>
        <begin position="136"/>
        <end position="139"/>
    </location>
    <ligand>
        <name>GTP</name>
        <dbReference type="ChEBI" id="CHEBI:37565"/>
    </ligand>
</feature>
<feature type="sequence conflict" description="In Ref. 2; AAB87734." evidence="3" ref="2">
    <original>A</original>
    <variation>G</variation>
    <location>
        <position position="109"/>
    </location>
</feature>
<feature type="sequence conflict" description="In Ref. 2; AAB87734." evidence="3" ref="2">
    <original>G</original>
    <variation>A</variation>
    <location>
        <position position="383"/>
    </location>
</feature>
<feature type="sequence conflict" description="In Ref. 2; AAB87734." evidence="3" ref="2">
    <original>GA</original>
    <variation>AG</variation>
    <location>
        <begin position="387"/>
        <end position="388"/>
    </location>
</feature>
<comment type="function">
    <text evidence="2">GTP hydrolase that promotes the GTP-dependent binding of aminoacyl-tRNA to the A-site of ribosomes during protein biosynthesis.</text>
</comment>
<comment type="catalytic activity">
    <reaction evidence="2">
        <text>GTP + H2O = GDP + phosphate + H(+)</text>
        <dbReference type="Rhea" id="RHEA:19669"/>
        <dbReference type="ChEBI" id="CHEBI:15377"/>
        <dbReference type="ChEBI" id="CHEBI:15378"/>
        <dbReference type="ChEBI" id="CHEBI:37565"/>
        <dbReference type="ChEBI" id="CHEBI:43474"/>
        <dbReference type="ChEBI" id="CHEBI:58189"/>
        <dbReference type="EC" id="3.6.5.3"/>
    </reaction>
    <physiologicalReaction direction="left-to-right" evidence="2">
        <dbReference type="Rhea" id="RHEA:19670"/>
    </physiologicalReaction>
</comment>
<comment type="subunit">
    <text evidence="2">Monomer.</text>
</comment>
<comment type="subcellular location">
    <subcellularLocation>
        <location evidence="2">Cytoplasm</location>
    </subcellularLocation>
</comment>
<comment type="similarity">
    <text evidence="2">Belongs to the TRAFAC class translation factor GTPase superfamily. Classic translation factor GTPase family. EF-Tu/EF-1A subfamily.</text>
</comment>
<name>EFTU_THIDL</name>
<reference key="1">
    <citation type="journal article" date="1993" name="Antonie Van Leeuwenhoek">
        <title>Phylogenetic relationships of Bacteria based on comparative sequence analysis of elongation factor Tu and ATP-synthase beta-subunit genes.</title>
        <authorList>
            <person name="Ludwig W."/>
            <person name="Neumaier J."/>
            <person name="Klugbauer N."/>
            <person name="Brockmann E."/>
            <person name="Roller C."/>
            <person name="Klugbauer S."/>
            <person name="Reetz K."/>
            <person name="Schachtner I."/>
            <person name="Ludvigsen A."/>
            <person name="Bachleitner M."/>
            <person name="Fischer U."/>
            <person name="Schleifer K.H."/>
        </authorList>
    </citation>
    <scope>NUCLEOTIDE SEQUENCE [GENOMIC DNA]</scope>
    <source>
        <strain>HOE5</strain>
    </source>
</reference>
<reference key="2">
    <citation type="submission" date="1996-11" db="EMBL/GenBank/DDBJ databases">
        <title>The str operon from the chemolithotrophic bacterium Thiobacillus cuprinus.</title>
        <authorList>
            <person name="Moreira D."/>
            <person name="Amils R."/>
        </authorList>
    </citation>
    <scope>NUCLEOTIDE SEQUENCE [GENOMIC DNA]</scope>
    <source>
        <strain>DSM 5495 / NBRC 102094 / Hoe5</strain>
    </source>
</reference>
<sequence>MAKSKFERTKPHVNVGTIGHVDHGKTTLTAAITTVLSSKFGGEAKAYDQIDAAPEEKARGITINTAHVEYETANRHYAHVDCPGHADYVKNMITGAAQMDGAILVVSAADGPMPQTREHILLARQVGVPYIIVFLNKCDMVDDAELLELVEMEVRELLSKYDFPGDDTPIIKGSAKLALEGDKGELGEGAILKLAEALDTYIPTPERAVDGAFLMPVEDVFSISGRGTVVTGRVERGIIKVGEEIEIVGLKPTLKTTCTGVEMFRKLLDQGQAGDNVGILLRGTKREEVERGQVLCKPGSIKPHTHFTAEVYVLSKDEGGRHTPFFNNYRPQFYFRTTDVTGAIELPKDKEMVMPGDNVSITVKLIAPIAMEEGLRFAIREGGRTVGAGVVAKIIE</sequence>
<protein>
    <recommendedName>
        <fullName evidence="2">Elongation factor Tu</fullName>
        <shortName evidence="2">EF-Tu</shortName>
        <ecNumber evidence="2">3.6.5.3</ecNumber>
    </recommendedName>
</protein>
<organism>
    <name type="scientific">Thiomonas delicata</name>
    <name type="common">Thiomonas cuprina</name>
    <dbReference type="NCBI Taxonomy" id="364030"/>
    <lineage>
        <taxon>Bacteria</taxon>
        <taxon>Pseudomonadati</taxon>
        <taxon>Pseudomonadota</taxon>
        <taxon>Betaproteobacteria</taxon>
        <taxon>Burkholderiales</taxon>
        <taxon>Thiomonas</taxon>
    </lineage>
</organism>
<evidence type="ECO:0000250" key="1"/>
<evidence type="ECO:0000255" key="2">
    <source>
        <dbReference type="HAMAP-Rule" id="MF_00118"/>
    </source>
</evidence>
<evidence type="ECO:0000305" key="3"/>
<proteinExistence type="inferred from homology"/>
<accession>P42481</accession>
<accession>O50566</accession>
<keyword id="KW-0963">Cytoplasm</keyword>
<keyword id="KW-0251">Elongation factor</keyword>
<keyword id="KW-0342">GTP-binding</keyword>
<keyword id="KW-0378">Hydrolase</keyword>
<keyword id="KW-0460">Magnesium</keyword>
<keyword id="KW-0479">Metal-binding</keyword>
<keyword id="KW-0547">Nucleotide-binding</keyword>
<keyword id="KW-0648">Protein biosynthesis</keyword>
<dbReference type="EC" id="3.6.5.3" evidence="2"/>
<dbReference type="EMBL" id="X76871">
    <property type="protein sequence ID" value="CAA54198.1"/>
    <property type="molecule type" value="Genomic_DNA"/>
</dbReference>
<dbReference type="EMBL" id="U78300">
    <property type="protein sequence ID" value="AAB87734.1"/>
    <property type="molecule type" value="Genomic_DNA"/>
</dbReference>
<dbReference type="RefSeq" id="WP_094159063.1">
    <property type="nucleotide sequence ID" value="NZ_LT592170.1"/>
</dbReference>
<dbReference type="SMR" id="P42481"/>
<dbReference type="OrthoDB" id="9803139at2"/>
<dbReference type="GO" id="GO:0005829">
    <property type="term" value="C:cytosol"/>
    <property type="evidence" value="ECO:0007669"/>
    <property type="project" value="TreeGrafter"/>
</dbReference>
<dbReference type="GO" id="GO:0005525">
    <property type="term" value="F:GTP binding"/>
    <property type="evidence" value="ECO:0007669"/>
    <property type="project" value="UniProtKB-UniRule"/>
</dbReference>
<dbReference type="GO" id="GO:0003924">
    <property type="term" value="F:GTPase activity"/>
    <property type="evidence" value="ECO:0007669"/>
    <property type="project" value="InterPro"/>
</dbReference>
<dbReference type="GO" id="GO:0097216">
    <property type="term" value="F:guanosine tetraphosphate binding"/>
    <property type="evidence" value="ECO:0007669"/>
    <property type="project" value="UniProtKB-ARBA"/>
</dbReference>
<dbReference type="GO" id="GO:0003746">
    <property type="term" value="F:translation elongation factor activity"/>
    <property type="evidence" value="ECO:0007669"/>
    <property type="project" value="UniProtKB-UniRule"/>
</dbReference>
<dbReference type="CDD" id="cd01884">
    <property type="entry name" value="EF_Tu"/>
    <property type="match status" value="1"/>
</dbReference>
<dbReference type="CDD" id="cd03697">
    <property type="entry name" value="EFTU_II"/>
    <property type="match status" value="1"/>
</dbReference>
<dbReference type="CDD" id="cd03707">
    <property type="entry name" value="EFTU_III"/>
    <property type="match status" value="1"/>
</dbReference>
<dbReference type="FunFam" id="2.40.30.10:FF:000001">
    <property type="entry name" value="Elongation factor Tu"/>
    <property type="match status" value="1"/>
</dbReference>
<dbReference type="FunFam" id="3.40.50.300:FF:000003">
    <property type="entry name" value="Elongation factor Tu"/>
    <property type="match status" value="1"/>
</dbReference>
<dbReference type="Gene3D" id="3.40.50.300">
    <property type="entry name" value="P-loop containing nucleotide triphosphate hydrolases"/>
    <property type="match status" value="1"/>
</dbReference>
<dbReference type="Gene3D" id="2.40.30.10">
    <property type="entry name" value="Translation factors"/>
    <property type="match status" value="2"/>
</dbReference>
<dbReference type="HAMAP" id="MF_00118_B">
    <property type="entry name" value="EF_Tu_B"/>
    <property type="match status" value="1"/>
</dbReference>
<dbReference type="InterPro" id="IPR041709">
    <property type="entry name" value="EF-Tu_GTP-bd"/>
</dbReference>
<dbReference type="InterPro" id="IPR050055">
    <property type="entry name" value="EF-Tu_GTPase"/>
</dbReference>
<dbReference type="InterPro" id="IPR004161">
    <property type="entry name" value="EFTu-like_2"/>
</dbReference>
<dbReference type="InterPro" id="IPR033720">
    <property type="entry name" value="EFTU_2"/>
</dbReference>
<dbReference type="InterPro" id="IPR031157">
    <property type="entry name" value="G_TR_CS"/>
</dbReference>
<dbReference type="InterPro" id="IPR027417">
    <property type="entry name" value="P-loop_NTPase"/>
</dbReference>
<dbReference type="InterPro" id="IPR005225">
    <property type="entry name" value="Small_GTP-bd"/>
</dbReference>
<dbReference type="InterPro" id="IPR000795">
    <property type="entry name" value="T_Tr_GTP-bd_dom"/>
</dbReference>
<dbReference type="InterPro" id="IPR009000">
    <property type="entry name" value="Transl_B-barrel_sf"/>
</dbReference>
<dbReference type="InterPro" id="IPR009001">
    <property type="entry name" value="Transl_elong_EF1A/Init_IF2_C"/>
</dbReference>
<dbReference type="InterPro" id="IPR004541">
    <property type="entry name" value="Transl_elong_EFTu/EF1A_bac/org"/>
</dbReference>
<dbReference type="InterPro" id="IPR004160">
    <property type="entry name" value="Transl_elong_EFTu/EF1A_C"/>
</dbReference>
<dbReference type="NCBIfam" id="TIGR00485">
    <property type="entry name" value="EF-Tu"/>
    <property type="match status" value="1"/>
</dbReference>
<dbReference type="NCBIfam" id="NF000766">
    <property type="entry name" value="PRK00049.1"/>
    <property type="match status" value="1"/>
</dbReference>
<dbReference type="NCBIfam" id="NF009372">
    <property type="entry name" value="PRK12735.1"/>
    <property type="match status" value="1"/>
</dbReference>
<dbReference type="NCBIfam" id="NF009373">
    <property type="entry name" value="PRK12736.1"/>
    <property type="match status" value="1"/>
</dbReference>
<dbReference type="NCBIfam" id="TIGR00231">
    <property type="entry name" value="small_GTP"/>
    <property type="match status" value="1"/>
</dbReference>
<dbReference type="PANTHER" id="PTHR43721:SF22">
    <property type="entry name" value="ELONGATION FACTOR TU, MITOCHONDRIAL"/>
    <property type="match status" value="1"/>
</dbReference>
<dbReference type="PANTHER" id="PTHR43721">
    <property type="entry name" value="ELONGATION FACTOR TU-RELATED"/>
    <property type="match status" value="1"/>
</dbReference>
<dbReference type="Pfam" id="PF00009">
    <property type="entry name" value="GTP_EFTU"/>
    <property type="match status" value="1"/>
</dbReference>
<dbReference type="Pfam" id="PF03144">
    <property type="entry name" value="GTP_EFTU_D2"/>
    <property type="match status" value="1"/>
</dbReference>
<dbReference type="Pfam" id="PF03143">
    <property type="entry name" value="GTP_EFTU_D3"/>
    <property type="match status" value="1"/>
</dbReference>
<dbReference type="PRINTS" id="PR00315">
    <property type="entry name" value="ELONGATNFCT"/>
</dbReference>
<dbReference type="SUPFAM" id="SSF50465">
    <property type="entry name" value="EF-Tu/eEF-1alpha/eIF2-gamma C-terminal domain"/>
    <property type="match status" value="1"/>
</dbReference>
<dbReference type="SUPFAM" id="SSF52540">
    <property type="entry name" value="P-loop containing nucleoside triphosphate hydrolases"/>
    <property type="match status" value="1"/>
</dbReference>
<dbReference type="SUPFAM" id="SSF50447">
    <property type="entry name" value="Translation proteins"/>
    <property type="match status" value="1"/>
</dbReference>
<dbReference type="PROSITE" id="PS00301">
    <property type="entry name" value="G_TR_1"/>
    <property type="match status" value="1"/>
</dbReference>
<dbReference type="PROSITE" id="PS51722">
    <property type="entry name" value="G_TR_2"/>
    <property type="match status" value="1"/>
</dbReference>
<gene>
    <name evidence="2" type="primary">tuf</name>
</gene>